<comment type="similarity">
    <text evidence="3">Belongs to the arrestin family.</text>
</comment>
<gene>
    <name type="primary">adcD</name>
    <name type="ORF">DDB_G0286693</name>
</gene>
<evidence type="ECO:0000255" key="1">
    <source>
        <dbReference type="PROSITE-ProRule" id="PRU00091"/>
    </source>
</evidence>
<evidence type="ECO:0000256" key="2">
    <source>
        <dbReference type="SAM" id="MobiDB-lite"/>
    </source>
</evidence>
<evidence type="ECO:0000305" key="3"/>
<reference key="1">
    <citation type="journal article" date="2005" name="Nature">
        <title>The genome of the social amoeba Dictyostelium discoideum.</title>
        <authorList>
            <person name="Eichinger L."/>
            <person name="Pachebat J.A."/>
            <person name="Gloeckner G."/>
            <person name="Rajandream M.A."/>
            <person name="Sucgang R."/>
            <person name="Berriman M."/>
            <person name="Song J."/>
            <person name="Olsen R."/>
            <person name="Szafranski K."/>
            <person name="Xu Q."/>
            <person name="Tunggal B."/>
            <person name="Kummerfeld S."/>
            <person name="Madera M."/>
            <person name="Konfortov B.A."/>
            <person name="Rivero F."/>
            <person name="Bankier A.T."/>
            <person name="Lehmann R."/>
            <person name="Hamlin N."/>
            <person name="Davies R."/>
            <person name="Gaudet P."/>
            <person name="Fey P."/>
            <person name="Pilcher K."/>
            <person name="Chen G."/>
            <person name="Saunders D."/>
            <person name="Sodergren E.J."/>
            <person name="Davis P."/>
            <person name="Kerhornou A."/>
            <person name="Nie X."/>
            <person name="Hall N."/>
            <person name="Anjard C."/>
            <person name="Hemphill L."/>
            <person name="Bason N."/>
            <person name="Farbrother P."/>
            <person name="Desany B."/>
            <person name="Just E."/>
            <person name="Morio T."/>
            <person name="Rost R."/>
            <person name="Churcher C.M."/>
            <person name="Cooper J."/>
            <person name="Haydock S."/>
            <person name="van Driessche N."/>
            <person name="Cronin A."/>
            <person name="Goodhead I."/>
            <person name="Muzny D.M."/>
            <person name="Mourier T."/>
            <person name="Pain A."/>
            <person name="Lu M."/>
            <person name="Harper D."/>
            <person name="Lindsay R."/>
            <person name="Hauser H."/>
            <person name="James K.D."/>
            <person name="Quiles M."/>
            <person name="Madan Babu M."/>
            <person name="Saito T."/>
            <person name="Buchrieser C."/>
            <person name="Wardroper A."/>
            <person name="Felder M."/>
            <person name="Thangavelu M."/>
            <person name="Johnson D."/>
            <person name="Knights A."/>
            <person name="Loulseged H."/>
            <person name="Mungall K.L."/>
            <person name="Oliver K."/>
            <person name="Price C."/>
            <person name="Quail M.A."/>
            <person name="Urushihara H."/>
            <person name="Hernandez J."/>
            <person name="Rabbinowitsch E."/>
            <person name="Steffen D."/>
            <person name="Sanders M."/>
            <person name="Ma J."/>
            <person name="Kohara Y."/>
            <person name="Sharp S."/>
            <person name="Simmonds M.N."/>
            <person name="Spiegler S."/>
            <person name="Tivey A."/>
            <person name="Sugano S."/>
            <person name="White B."/>
            <person name="Walker D."/>
            <person name="Woodward J.R."/>
            <person name="Winckler T."/>
            <person name="Tanaka Y."/>
            <person name="Shaulsky G."/>
            <person name="Schleicher M."/>
            <person name="Weinstock G.M."/>
            <person name="Rosenthal A."/>
            <person name="Cox E.C."/>
            <person name="Chisholm R.L."/>
            <person name="Gibbs R.A."/>
            <person name="Loomis W.F."/>
            <person name="Platzer M."/>
            <person name="Kay R.R."/>
            <person name="Williams J.G."/>
            <person name="Dear P.H."/>
            <person name="Noegel A.A."/>
            <person name="Barrell B.G."/>
            <person name="Kuspa A."/>
        </authorList>
    </citation>
    <scope>NUCLEOTIDE SEQUENCE [LARGE SCALE GENOMIC DNA]</scope>
    <source>
        <strain>AX4</strain>
    </source>
</reference>
<organism>
    <name type="scientific">Dictyostelium discoideum</name>
    <name type="common">Social amoeba</name>
    <dbReference type="NCBI Taxonomy" id="44689"/>
    <lineage>
        <taxon>Eukaryota</taxon>
        <taxon>Amoebozoa</taxon>
        <taxon>Evosea</taxon>
        <taxon>Eumycetozoa</taxon>
        <taxon>Dictyostelia</taxon>
        <taxon>Dictyosteliales</taxon>
        <taxon>Dictyosteliaceae</taxon>
        <taxon>Dictyostelium</taxon>
    </lineage>
</organism>
<feature type="chain" id="PRO_0000363157" description="Arrestin domain-containing protein D">
    <location>
        <begin position="1"/>
        <end position="785"/>
    </location>
</feature>
<feature type="zinc finger region" description="FYVE-type" evidence="1">
    <location>
        <begin position="682"/>
        <end position="742"/>
    </location>
</feature>
<feature type="zinc finger region" description="RING-type; degenerate">
    <location>
        <begin position="688"/>
        <end position="738"/>
    </location>
</feature>
<feature type="region of interest" description="Disordered" evidence="2">
    <location>
        <begin position="29"/>
        <end position="69"/>
    </location>
</feature>
<feature type="region of interest" description="Disordered" evidence="2">
    <location>
        <begin position="172"/>
        <end position="205"/>
    </location>
</feature>
<feature type="region of interest" description="Disordered" evidence="2">
    <location>
        <begin position="326"/>
        <end position="367"/>
    </location>
</feature>
<feature type="region of interest" description="Disordered" evidence="2">
    <location>
        <begin position="435"/>
        <end position="486"/>
    </location>
</feature>
<feature type="region of interest" description="Disordered" evidence="2">
    <location>
        <begin position="608"/>
        <end position="642"/>
    </location>
</feature>
<feature type="compositionally biased region" description="Low complexity" evidence="2">
    <location>
        <begin position="173"/>
        <end position="205"/>
    </location>
</feature>
<feature type="compositionally biased region" description="Low complexity" evidence="2">
    <location>
        <begin position="435"/>
        <end position="450"/>
    </location>
</feature>
<feature type="compositionally biased region" description="Basic residues" evidence="2">
    <location>
        <begin position="466"/>
        <end position="478"/>
    </location>
</feature>
<feature type="compositionally biased region" description="Low complexity" evidence="2">
    <location>
        <begin position="608"/>
        <end position="633"/>
    </location>
</feature>
<feature type="binding site" evidence="1">
    <location>
        <position position="688"/>
    </location>
    <ligand>
        <name>Zn(2+)</name>
        <dbReference type="ChEBI" id="CHEBI:29105"/>
        <label>1</label>
    </ligand>
</feature>
<feature type="binding site" evidence="1">
    <location>
        <position position="691"/>
    </location>
    <ligand>
        <name>Zn(2+)</name>
        <dbReference type="ChEBI" id="CHEBI:29105"/>
        <label>1</label>
    </ligand>
</feature>
<feature type="binding site" evidence="1">
    <location>
        <position position="704"/>
    </location>
    <ligand>
        <name>Zn(2+)</name>
        <dbReference type="ChEBI" id="CHEBI:29105"/>
        <label>2</label>
    </ligand>
</feature>
<feature type="binding site" evidence="1">
    <location>
        <position position="707"/>
    </location>
    <ligand>
        <name>Zn(2+)</name>
        <dbReference type="ChEBI" id="CHEBI:29105"/>
        <label>2</label>
    </ligand>
</feature>
<feature type="binding site" evidence="1">
    <location>
        <position position="712"/>
    </location>
    <ligand>
        <name>Zn(2+)</name>
        <dbReference type="ChEBI" id="CHEBI:29105"/>
        <label>1</label>
    </ligand>
</feature>
<feature type="binding site" evidence="1">
    <location>
        <position position="715"/>
    </location>
    <ligand>
        <name>Zn(2+)</name>
        <dbReference type="ChEBI" id="CHEBI:29105"/>
        <label>1</label>
    </ligand>
</feature>
<feature type="binding site" evidence="1">
    <location>
        <position position="734"/>
    </location>
    <ligand>
        <name>Zn(2+)</name>
        <dbReference type="ChEBI" id="CHEBI:29105"/>
        <label>2</label>
    </ligand>
</feature>
<feature type="binding site" evidence="1">
    <location>
        <position position="737"/>
    </location>
    <ligand>
        <name>Zn(2+)</name>
        <dbReference type="ChEBI" id="CHEBI:29105"/>
        <label>2</label>
    </ligand>
</feature>
<dbReference type="EMBL" id="AAFI02000089">
    <property type="protein sequence ID" value="EAL64102.1"/>
    <property type="molecule type" value="Genomic_DNA"/>
</dbReference>
<dbReference type="RefSeq" id="XP_637626.1">
    <property type="nucleotide sequence ID" value="XM_632534.1"/>
</dbReference>
<dbReference type="SMR" id="Q54LD5"/>
<dbReference type="FunCoup" id="Q54LD5">
    <property type="interactions" value="362"/>
</dbReference>
<dbReference type="STRING" id="44689.Q54LD5"/>
<dbReference type="PaxDb" id="44689-DDB0267090"/>
<dbReference type="EnsemblProtists" id="EAL64102">
    <property type="protein sequence ID" value="EAL64102"/>
    <property type="gene ID" value="DDB_G0286693"/>
</dbReference>
<dbReference type="GeneID" id="8625767"/>
<dbReference type="KEGG" id="ddi:DDB_G0286693"/>
<dbReference type="dictyBase" id="DDB_G0286693">
    <property type="gene designation" value="adcD"/>
</dbReference>
<dbReference type="VEuPathDB" id="AmoebaDB:DDB_G0286693"/>
<dbReference type="eggNOG" id="KOG1818">
    <property type="taxonomic scope" value="Eukaryota"/>
</dbReference>
<dbReference type="HOGENOM" id="CLU_357327_0_0_1"/>
<dbReference type="InParanoid" id="Q54LD5"/>
<dbReference type="OMA" id="WLPKWKD"/>
<dbReference type="PRO" id="PR:Q54LD5"/>
<dbReference type="Proteomes" id="UP000002195">
    <property type="component" value="Chromosome 4"/>
</dbReference>
<dbReference type="GO" id="GO:0008270">
    <property type="term" value="F:zinc ion binding"/>
    <property type="evidence" value="ECO:0007669"/>
    <property type="project" value="UniProtKB-KW"/>
</dbReference>
<dbReference type="Gene3D" id="2.60.40.640">
    <property type="match status" value="1"/>
</dbReference>
<dbReference type="Gene3D" id="3.30.40.10">
    <property type="entry name" value="Zinc/RING finger domain, C3HC4 (zinc finger)"/>
    <property type="match status" value="1"/>
</dbReference>
<dbReference type="InterPro" id="IPR014752">
    <property type="entry name" value="Arrestin-like_C"/>
</dbReference>
<dbReference type="InterPro" id="IPR011021">
    <property type="entry name" value="Arrestin-like_N"/>
</dbReference>
<dbReference type="InterPro" id="IPR052113">
    <property type="entry name" value="FYVE-type_Zinc_Finger"/>
</dbReference>
<dbReference type="InterPro" id="IPR014756">
    <property type="entry name" value="Ig_E-set"/>
</dbReference>
<dbReference type="InterPro" id="IPR000306">
    <property type="entry name" value="Znf_FYVE"/>
</dbReference>
<dbReference type="InterPro" id="IPR017455">
    <property type="entry name" value="Znf_FYVE-rel"/>
</dbReference>
<dbReference type="InterPro" id="IPR011011">
    <property type="entry name" value="Znf_FYVE_PHD"/>
</dbReference>
<dbReference type="InterPro" id="IPR013083">
    <property type="entry name" value="Znf_RING/FYVE/PHD"/>
</dbReference>
<dbReference type="PANTHER" id="PTHR39490">
    <property type="entry name" value="ARRESTIN DOMAIN-CONTAINING PROTEIN D"/>
    <property type="match status" value="1"/>
</dbReference>
<dbReference type="PANTHER" id="PTHR39490:SF8">
    <property type="entry name" value="ZINC FINGER FYVE DOMAIN-CONTAINING PROTEIN 21"/>
    <property type="match status" value="1"/>
</dbReference>
<dbReference type="Pfam" id="PF00339">
    <property type="entry name" value="Arrestin_N"/>
    <property type="match status" value="1"/>
</dbReference>
<dbReference type="Pfam" id="PF01363">
    <property type="entry name" value="FYVE"/>
    <property type="match status" value="1"/>
</dbReference>
<dbReference type="SMART" id="SM00064">
    <property type="entry name" value="FYVE"/>
    <property type="match status" value="1"/>
</dbReference>
<dbReference type="SUPFAM" id="SSF81296">
    <property type="entry name" value="E set domains"/>
    <property type="match status" value="1"/>
</dbReference>
<dbReference type="SUPFAM" id="SSF57903">
    <property type="entry name" value="FYVE/PHD zinc finger"/>
    <property type="match status" value="1"/>
</dbReference>
<dbReference type="PROSITE" id="PS50178">
    <property type="entry name" value="ZF_FYVE"/>
    <property type="match status" value="1"/>
</dbReference>
<accession>Q54LD5</accession>
<proteinExistence type="inferred from homology"/>
<protein>
    <recommendedName>
        <fullName>Arrestin domain-containing protein D</fullName>
    </recommendedName>
</protein>
<sequence length="785" mass="88552">MTTLLNNHHNNNSLPIQISQQHVLINSNQNESNQPSSLFNSISPQKKLSPTLNSTSIPPPPPSSSSKYPLELSEKGQICNLKINLDKSYFTNGETISGKVNILLTERQCIKRVKLQLCGYEKIFQHAQHSNNTYQTFKFYSGNLNIPPLNVNIETTSLNSLPISNSENNSPILLPTTTSTQNSTLSPTLLSSNLNSKSSTTTTTTTGMMSSVSSLSSSFSQQLTTPIHEFESGVYEYPFSFQLPKYLAPSLNYIGYLSIFYLVHCKVDYSKGREWKDQKVMKSSELWISGINKQYQDYLLYNKTHFTSHKLAHYLNWLSFGTNTNSNNSNNNNNNNNNNNNNNNNNNNNNNNNNNNNNNQPSTITNNNINNNNNIGISNNYKSNPIEMAICLRENNCYIGSKATFFIQLKNPLNLKINSIRVELFQQISFIKTLSNSNSSSSGGSSNKNNNGGGIGNDRISNIQKSNKKSSGSHRYHYRNNSSDHNIDKTKVSQTQILLHNYDCRELFKNQTTTSSSSSQEILCSTNLQILIPFKIEDDQVFPTTRGFLSTVKHFFIISIPSISNFKLKIPVHLWQRFDDNNFTTISNNIHSLPFHTSNSFGNIRNSYSSSGSGSGSGSSNSNSNHSSSNYLNEQEENLDEQQQQNYDDEFYDDEDDEDNDRFKLNPPKEWKVLWLPKWKDESSITNCNLCDNTFTIIRRTHHCRACGGVFCEACSNQKVCLYGFGVNNKVRICLMCFDAVKAESSNSIYGSNINSSILPFKNGLPLQNVFSKKKVYKPPYLVHL</sequence>
<name>ADCD_DICDI</name>
<keyword id="KW-0479">Metal-binding</keyword>
<keyword id="KW-1185">Reference proteome</keyword>
<keyword id="KW-0862">Zinc</keyword>
<keyword id="KW-0863">Zinc-finger</keyword>